<name>PSBF_TYPAN</name>
<evidence type="ECO:0000255" key="1">
    <source>
        <dbReference type="HAMAP-Rule" id="MF_00643"/>
    </source>
</evidence>
<sequence>MTIDRTYPIFTVRWLAVHGLAVPTVSFLGSISAMQFIQR</sequence>
<geneLocation type="chloroplast"/>
<proteinExistence type="inferred from homology"/>
<accession>Q67HJ7</accession>
<keyword id="KW-0150">Chloroplast</keyword>
<keyword id="KW-0249">Electron transport</keyword>
<keyword id="KW-0349">Heme</keyword>
<keyword id="KW-0408">Iron</keyword>
<keyword id="KW-0472">Membrane</keyword>
<keyword id="KW-0479">Metal-binding</keyword>
<keyword id="KW-0602">Photosynthesis</keyword>
<keyword id="KW-0604">Photosystem II</keyword>
<keyword id="KW-0934">Plastid</keyword>
<keyword id="KW-0793">Thylakoid</keyword>
<keyword id="KW-0812">Transmembrane</keyword>
<keyword id="KW-1133">Transmembrane helix</keyword>
<keyword id="KW-0813">Transport</keyword>
<reference key="1">
    <citation type="submission" date="2002-09" db="EMBL/GenBank/DDBJ databases">
        <title>Phylogenetic relationships among the major lineages of Asparagales based on a large chloroplast data set.</title>
        <authorList>
            <person name="McPherson M.A."/>
            <person name="Rai H.S."/>
            <person name="Wong W.A."/>
            <person name="Graham S.W."/>
        </authorList>
    </citation>
    <scope>NUCLEOTIDE SEQUENCE [GENOMIC DNA]</scope>
</reference>
<gene>
    <name evidence="1" type="primary">psbF</name>
</gene>
<protein>
    <recommendedName>
        <fullName evidence="1">Cytochrome b559 subunit beta</fullName>
    </recommendedName>
    <alternativeName>
        <fullName evidence="1">PSII reaction center subunit VI</fullName>
    </alternativeName>
</protein>
<comment type="function">
    <text evidence="1">This b-type cytochrome is tightly associated with the reaction center of photosystem II (PSII). PSII is a light-driven water:plastoquinone oxidoreductase that uses light energy to abstract electrons from H(2)O, generating O(2) and a proton gradient subsequently used for ATP formation. It consists of a core antenna complex that captures photons, and an electron transfer chain that converts photonic excitation into a charge separation.</text>
</comment>
<comment type="cofactor">
    <cofactor evidence="1">
        <name>heme b</name>
        <dbReference type="ChEBI" id="CHEBI:60344"/>
    </cofactor>
    <text evidence="1">With its partner (PsbE) binds heme. PSII binds additional chlorophylls, carotenoids and specific lipids.</text>
</comment>
<comment type="subunit">
    <text evidence="1">Heterodimer of an alpha subunit and a beta subunit. PSII is composed of 1 copy each of membrane proteins PsbA, PsbB, PsbC, PsbD, PsbE, PsbF, PsbH, PsbI, PsbJ, PsbK, PsbL, PsbM, PsbT, PsbX, PsbY, PsbZ, Psb30/Ycf12, at least 3 peripheral proteins of the oxygen-evolving complex and a large number of cofactors. It forms dimeric complexes.</text>
</comment>
<comment type="subcellular location">
    <subcellularLocation>
        <location evidence="1">Plastid</location>
        <location evidence="1">Chloroplast thylakoid membrane</location>
        <topology evidence="1">Single-pass membrane protein</topology>
    </subcellularLocation>
</comment>
<comment type="similarity">
    <text evidence="1">Belongs to the PsbE/PsbF family.</text>
</comment>
<feature type="chain" id="PRO_0000200462" description="Cytochrome b559 subunit beta">
    <location>
        <begin position="1"/>
        <end position="39"/>
    </location>
</feature>
<feature type="transmembrane region" description="Helical" evidence="1">
    <location>
        <begin position="14"/>
        <end position="30"/>
    </location>
</feature>
<feature type="binding site" description="axial binding residue" evidence="1">
    <location>
        <position position="18"/>
    </location>
    <ligand>
        <name>heme</name>
        <dbReference type="ChEBI" id="CHEBI:30413"/>
        <note>ligand shared with alpha subunit</note>
    </ligand>
    <ligandPart>
        <name>Fe</name>
        <dbReference type="ChEBI" id="CHEBI:18248"/>
    </ligandPart>
</feature>
<dbReference type="EMBL" id="AY147564">
    <property type="protein sequence ID" value="AAN32357.1"/>
    <property type="molecule type" value="Genomic_DNA"/>
</dbReference>
<dbReference type="SMR" id="Q67HJ7"/>
<dbReference type="GO" id="GO:0009535">
    <property type="term" value="C:chloroplast thylakoid membrane"/>
    <property type="evidence" value="ECO:0007669"/>
    <property type="project" value="UniProtKB-SubCell"/>
</dbReference>
<dbReference type="GO" id="GO:0009539">
    <property type="term" value="C:photosystem II reaction center"/>
    <property type="evidence" value="ECO:0007669"/>
    <property type="project" value="InterPro"/>
</dbReference>
<dbReference type="GO" id="GO:0009055">
    <property type="term" value="F:electron transfer activity"/>
    <property type="evidence" value="ECO:0007669"/>
    <property type="project" value="UniProtKB-UniRule"/>
</dbReference>
<dbReference type="GO" id="GO:0020037">
    <property type="term" value="F:heme binding"/>
    <property type="evidence" value="ECO:0007669"/>
    <property type="project" value="InterPro"/>
</dbReference>
<dbReference type="GO" id="GO:0005506">
    <property type="term" value="F:iron ion binding"/>
    <property type="evidence" value="ECO:0007669"/>
    <property type="project" value="UniProtKB-UniRule"/>
</dbReference>
<dbReference type="GO" id="GO:0009767">
    <property type="term" value="P:photosynthetic electron transport chain"/>
    <property type="evidence" value="ECO:0007669"/>
    <property type="project" value="InterPro"/>
</dbReference>
<dbReference type="HAMAP" id="MF_00643">
    <property type="entry name" value="PSII_PsbF"/>
    <property type="match status" value="1"/>
</dbReference>
<dbReference type="InterPro" id="IPR006241">
    <property type="entry name" value="PSII_cyt_b559_bsu"/>
</dbReference>
<dbReference type="InterPro" id="IPR006216">
    <property type="entry name" value="PSII_cyt_b559_CS"/>
</dbReference>
<dbReference type="InterPro" id="IPR013081">
    <property type="entry name" value="PSII_cyt_b559_N"/>
</dbReference>
<dbReference type="NCBIfam" id="TIGR01333">
    <property type="entry name" value="cyt_b559_beta"/>
    <property type="match status" value="1"/>
</dbReference>
<dbReference type="Pfam" id="PF00283">
    <property type="entry name" value="Cytochrom_B559"/>
    <property type="match status" value="1"/>
</dbReference>
<dbReference type="PIRSF" id="PIRSF000037">
    <property type="entry name" value="PsbF"/>
    <property type="match status" value="1"/>
</dbReference>
<dbReference type="SUPFAM" id="SSF161045">
    <property type="entry name" value="Cytochrome b559 subunits"/>
    <property type="match status" value="1"/>
</dbReference>
<dbReference type="PROSITE" id="PS00537">
    <property type="entry name" value="CYTOCHROME_B559"/>
    <property type="match status" value="1"/>
</dbReference>
<organism>
    <name type="scientific">Typha angustifolia</name>
    <name type="common">Narrow leaf cattail</name>
    <dbReference type="NCBI Taxonomy" id="59011"/>
    <lineage>
        <taxon>Eukaryota</taxon>
        <taxon>Viridiplantae</taxon>
        <taxon>Streptophyta</taxon>
        <taxon>Embryophyta</taxon>
        <taxon>Tracheophyta</taxon>
        <taxon>Spermatophyta</taxon>
        <taxon>Magnoliopsida</taxon>
        <taxon>Liliopsida</taxon>
        <taxon>Poales</taxon>
        <taxon>Typhaceae</taxon>
        <taxon>Typha</taxon>
    </lineage>
</organism>